<sequence>MNQPIEPDHINVPTEALESLRLRLTQVSHSLNTLQAQLHQPTLPPWSSLHNQFNVLLTQLVSLSSTITHQSDILQQTVTFPLPAFPTATEAGLMATLLRKKILPEVEEWCEEVKQKALGVKIRTVDQYGEWAAETVEEAKQEYEWYGLMTREEVDNGVKPPVYVAPEEEAGEGAKLTIEQILQFTCAGKMPTVA</sequence>
<protein>
    <recommendedName>
        <fullName>Mediator of RNA polymerase II transcription subunit 8</fullName>
    </recommendedName>
    <alternativeName>
        <fullName>Mediator complex subunit 8</fullName>
    </alternativeName>
</protein>
<keyword id="KW-0010">Activator</keyword>
<keyword id="KW-0539">Nucleus</keyword>
<keyword id="KW-1185">Reference proteome</keyword>
<keyword id="KW-0804">Transcription</keyword>
<keyword id="KW-0805">Transcription regulation</keyword>
<name>MED8_YARLI</name>
<comment type="function">
    <text evidence="1">Component of the Mediator complex, a coactivator involved in the regulated transcription of nearly all RNA polymerase II-dependent genes. Mediator functions as a bridge to convey information from gene-specific regulatory proteins to the basal RNA polymerase II transcription machinery. Mediator is recruited to promoters by direct interactions with regulatory proteins and serves as a scaffold for the assembly of a functional preinitiation complex with RNA polymerase II and the general transcription factors (By similarity).</text>
</comment>
<comment type="subunit">
    <text evidence="1">Component of the Mediator complex.</text>
</comment>
<comment type="subcellular location">
    <subcellularLocation>
        <location evidence="2">Nucleus</location>
    </subcellularLocation>
</comment>
<comment type="similarity">
    <text evidence="2">Belongs to the Mediator complex subunit 8 family.</text>
</comment>
<proteinExistence type="inferred from homology"/>
<reference key="1">
    <citation type="journal article" date="2004" name="Nature">
        <title>Genome evolution in yeasts.</title>
        <authorList>
            <person name="Dujon B."/>
            <person name="Sherman D."/>
            <person name="Fischer G."/>
            <person name="Durrens P."/>
            <person name="Casaregola S."/>
            <person name="Lafontaine I."/>
            <person name="de Montigny J."/>
            <person name="Marck C."/>
            <person name="Neuveglise C."/>
            <person name="Talla E."/>
            <person name="Goffard N."/>
            <person name="Frangeul L."/>
            <person name="Aigle M."/>
            <person name="Anthouard V."/>
            <person name="Babour A."/>
            <person name="Barbe V."/>
            <person name="Barnay S."/>
            <person name="Blanchin S."/>
            <person name="Beckerich J.-M."/>
            <person name="Beyne E."/>
            <person name="Bleykasten C."/>
            <person name="Boisrame A."/>
            <person name="Boyer J."/>
            <person name="Cattolico L."/>
            <person name="Confanioleri F."/>
            <person name="de Daruvar A."/>
            <person name="Despons L."/>
            <person name="Fabre E."/>
            <person name="Fairhead C."/>
            <person name="Ferry-Dumazet H."/>
            <person name="Groppi A."/>
            <person name="Hantraye F."/>
            <person name="Hennequin C."/>
            <person name="Jauniaux N."/>
            <person name="Joyet P."/>
            <person name="Kachouri R."/>
            <person name="Kerrest A."/>
            <person name="Koszul R."/>
            <person name="Lemaire M."/>
            <person name="Lesur I."/>
            <person name="Ma L."/>
            <person name="Muller H."/>
            <person name="Nicaud J.-M."/>
            <person name="Nikolski M."/>
            <person name="Oztas S."/>
            <person name="Ozier-Kalogeropoulos O."/>
            <person name="Pellenz S."/>
            <person name="Potier S."/>
            <person name="Richard G.-F."/>
            <person name="Straub M.-L."/>
            <person name="Suleau A."/>
            <person name="Swennen D."/>
            <person name="Tekaia F."/>
            <person name="Wesolowski-Louvel M."/>
            <person name="Westhof E."/>
            <person name="Wirth B."/>
            <person name="Zeniou-Meyer M."/>
            <person name="Zivanovic Y."/>
            <person name="Bolotin-Fukuhara M."/>
            <person name="Thierry A."/>
            <person name="Bouchier C."/>
            <person name="Caudron B."/>
            <person name="Scarpelli C."/>
            <person name="Gaillardin C."/>
            <person name="Weissenbach J."/>
            <person name="Wincker P."/>
            <person name="Souciet J.-L."/>
        </authorList>
    </citation>
    <scope>NUCLEOTIDE SEQUENCE [LARGE SCALE GENOMIC DNA]</scope>
    <source>
        <strain>CLIB 122 / E 150</strain>
    </source>
</reference>
<dbReference type="EMBL" id="CR382128">
    <property type="protein sequence ID" value="CAG82628.1"/>
    <property type="molecule type" value="Genomic_DNA"/>
</dbReference>
<dbReference type="RefSeq" id="XP_500410.1">
    <property type="nucleotide sequence ID" value="XM_500410.1"/>
</dbReference>
<dbReference type="SMR" id="Q6CG02"/>
<dbReference type="FunCoup" id="Q6CG02">
    <property type="interactions" value="142"/>
</dbReference>
<dbReference type="STRING" id="284591.Q6CG02"/>
<dbReference type="EnsemblFungi" id="CAG82628">
    <property type="protein sequence ID" value="CAG82628"/>
    <property type="gene ID" value="YALI0_B02068g"/>
</dbReference>
<dbReference type="KEGG" id="yli:2907557"/>
<dbReference type="VEuPathDB" id="FungiDB:YALI0_B02068g"/>
<dbReference type="HOGENOM" id="CLU_108151_0_0_1"/>
<dbReference type="InParanoid" id="Q6CG02"/>
<dbReference type="OMA" id="PQWYSLQ"/>
<dbReference type="OrthoDB" id="7858at4891"/>
<dbReference type="Proteomes" id="UP000001300">
    <property type="component" value="Chromosome B"/>
</dbReference>
<dbReference type="GO" id="GO:0070847">
    <property type="term" value="C:core mediator complex"/>
    <property type="evidence" value="ECO:0000318"/>
    <property type="project" value="GO_Central"/>
</dbReference>
<dbReference type="GO" id="GO:0016592">
    <property type="term" value="C:mediator complex"/>
    <property type="evidence" value="ECO:0000318"/>
    <property type="project" value="GO_Central"/>
</dbReference>
<dbReference type="GO" id="GO:0000978">
    <property type="term" value="F:RNA polymerase II cis-regulatory region sequence-specific DNA binding"/>
    <property type="evidence" value="ECO:0000318"/>
    <property type="project" value="GO_Central"/>
</dbReference>
<dbReference type="GO" id="GO:0003712">
    <property type="term" value="F:transcription coregulator activity"/>
    <property type="evidence" value="ECO:0000318"/>
    <property type="project" value="GO_Central"/>
</dbReference>
<dbReference type="GO" id="GO:0006357">
    <property type="term" value="P:regulation of transcription by RNA polymerase II"/>
    <property type="evidence" value="ECO:0000318"/>
    <property type="project" value="GO_Central"/>
</dbReference>
<dbReference type="Gene3D" id="1.20.58.1710">
    <property type="match status" value="1"/>
</dbReference>
<dbReference type="Gene3D" id="6.10.250.2610">
    <property type="match status" value="1"/>
</dbReference>
<dbReference type="InterPro" id="IPR019364">
    <property type="entry name" value="Mediatior_Med8_fun/met"/>
</dbReference>
<dbReference type="PANTHER" id="PTHR13074">
    <property type="entry name" value="MEDIATOR OF RNA POLYMERASE II TRANSCRIPTION SUBUNIT 8"/>
    <property type="match status" value="1"/>
</dbReference>
<dbReference type="PANTHER" id="PTHR13074:SF9">
    <property type="entry name" value="MEDIATOR OF RNA POLYMERASE II TRANSCRIPTION SUBUNIT 8"/>
    <property type="match status" value="1"/>
</dbReference>
<dbReference type="Pfam" id="PF10232">
    <property type="entry name" value="Med8"/>
    <property type="match status" value="1"/>
</dbReference>
<organism>
    <name type="scientific">Yarrowia lipolytica (strain CLIB 122 / E 150)</name>
    <name type="common">Yeast</name>
    <name type="synonym">Candida lipolytica</name>
    <dbReference type="NCBI Taxonomy" id="284591"/>
    <lineage>
        <taxon>Eukaryota</taxon>
        <taxon>Fungi</taxon>
        <taxon>Dikarya</taxon>
        <taxon>Ascomycota</taxon>
        <taxon>Saccharomycotina</taxon>
        <taxon>Dipodascomycetes</taxon>
        <taxon>Dipodascales</taxon>
        <taxon>Dipodascales incertae sedis</taxon>
        <taxon>Yarrowia</taxon>
    </lineage>
</organism>
<feature type="chain" id="PRO_0000304547" description="Mediator of RNA polymerase II transcription subunit 8">
    <location>
        <begin position="1"/>
        <end position="194"/>
    </location>
</feature>
<evidence type="ECO:0000250" key="1"/>
<evidence type="ECO:0000305" key="2"/>
<accession>Q6CG02</accession>
<gene>
    <name type="primary">MED8</name>
    <name type="ordered locus">YALI0B02068g</name>
</gene>